<protein>
    <recommendedName>
        <fullName>Retinol dehydrogenase 10-A</fullName>
        <ecNumber>1.1.1.300</ecNumber>
    </recommendedName>
</protein>
<gene>
    <name type="primary">rdh10-a</name>
</gene>
<feature type="chain" id="PRO_0000307687" description="Retinol dehydrogenase 10-A">
    <location>
        <begin position="1"/>
        <end position="341"/>
    </location>
</feature>
<feature type="transmembrane region" description="Helical; Signal-anchor" evidence="2">
    <location>
        <begin position="3"/>
        <end position="23"/>
    </location>
</feature>
<feature type="active site" description="Proton acceptor" evidence="3">
    <location>
        <position position="210"/>
    </location>
</feature>
<feature type="binding site" evidence="1">
    <location>
        <begin position="40"/>
        <end position="64"/>
    </location>
    <ligand>
        <name>NADP(+)</name>
        <dbReference type="ChEBI" id="CHEBI:58349"/>
    </ligand>
</feature>
<feature type="binding site" evidence="1">
    <location>
        <position position="197"/>
    </location>
    <ligand>
        <name>substrate</name>
    </ligand>
</feature>
<evidence type="ECO:0000250" key="1"/>
<evidence type="ECO:0000255" key="2"/>
<evidence type="ECO:0000255" key="3">
    <source>
        <dbReference type="PROSITE-ProRule" id="PRU10001"/>
    </source>
</evidence>
<evidence type="ECO:0000305" key="4"/>
<organism>
    <name type="scientific">Xenopus laevis</name>
    <name type="common">African clawed frog</name>
    <dbReference type="NCBI Taxonomy" id="8355"/>
    <lineage>
        <taxon>Eukaryota</taxon>
        <taxon>Metazoa</taxon>
        <taxon>Chordata</taxon>
        <taxon>Craniata</taxon>
        <taxon>Vertebrata</taxon>
        <taxon>Euteleostomi</taxon>
        <taxon>Amphibia</taxon>
        <taxon>Batrachia</taxon>
        <taxon>Anura</taxon>
        <taxon>Pipoidea</taxon>
        <taxon>Pipidae</taxon>
        <taxon>Xenopodinae</taxon>
        <taxon>Xenopus</taxon>
        <taxon>Xenopus</taxon>
    </lineage>
</organism>
<keyword id="KW-0256">Endoplasmic reticulum</keyword>
<keyword id="KW-0472">Membrane</keyword>
<keyword id="KW-0492">Microsome</keyword>
<keyword id="KW-0521">NADP</keyword>
<keyword id="KW-0560">Oxidoreductase</keyword>
<keyword id="KW-1185">Reference proteome</keyword>
<keyword id="KW-0735">Signal-anchor</keyword>
<keyword id="KW-0812">Transmembrane</keyword>
<keyword id="KW-1133">Transmembrane helix</keyword>
<dbReference type="EC" id="1.1.1.300"/>
<dbReference type="EMBL" id="BC077913">
    <property type="protein sequence ID" value="AAH77913.1"/>
    <property type="molecule type" value="mRNA"/>
</dbReference>
<dbReference type="RefSeq" id="NP_001087025.1">
    <property type="nucleotide sequence ID" value="NM_001093556.1"/>
</dbReference>
<dbReference type="SMR" id="Q6DCT3"/>
<dbReference type="DNASU" id="446860"/>
<dbReference type="GeneID" id="446860"/>
<dbReference type="KEGG" id="xla:446860"/>
<dbReference type="AGR" id="Xenbase:XB-GENE-944967"/>
<dbReference type="CTD" id="446860"/>
<dbReference type="Xenbase" id="XB-GENE-944967">
    <property type="gene designation" value="rdh10.L"/>
</dbReference>
<dbReference type="OrthoDB" id="5840532at2759"/>
<dbReference type="UniPathway" id="UPA00912"/>
<dbReference type="Proteomes" id="UP000186698">
    <property type="component" value="Chromosome 6L"/>
</dbReference>
<dbReference type="Bgee" id="446860">
    <property type="expression patterns" value="Expressed in camera-type eye and 19 other cell types or tissues"/>
</dbReference>
<dbReference type="GO" id="GO:0005789">
    <property type="term" value="C:endoplasmic reticulum membrane"/>
    <property type="evidence" value="ECO:0007669"/>
    <property type="project" value="UniProtKB-SubCell"/>
</dbReference>
<dbReference type="GO" id="GO:0005811">
    <property type="term" value="C:lipid droplet"/>
    <property type="evidence" value="ECO:0000318"/>
    <property type="project" value="GO_Central"/>
</dbReference>
<dbReference type="GO" id="GO:0052650">
    <property type="term" value="F:all-trans-retinol dehydrogenase (NADP+) activity"/>
    <property type="evidence" value="ECO:0007669"/>
    <property type="project" value="UniProtKB-EC"/>
</dbReference>
<dbReference type="GO" id="GO:0016616">
    <property type="term" value="F:oxidoreductase activity, acting on the CH-OH group of donors, NAD or NADP as acceptor"/>
    <property type="evidence" value="ECO:0000318"/>
    <property type="project" value="GO_Central"/>
</dbReference>
<dbReference type="CDD" id="cd05339">
    <property type="entry name" value="17beta-HSDXI-like_SDR_c"/>
    <property type="match status" value="1"/>
</dbReference>
<dbReference type="FunFam" id="3.40.50.720:FF:000177">
    <property type="entry name" value="Retinol dehydrogenase 10"/>
    <property type="match status" value="1"/>
</dbReference>
<dbReference type="Gene3D" id="3.40.50.720">
    <property type="entry name" value="NAD(P)-binding Rossmann-like Domain"/>
    <property type="match status" value="1"/>
</dbReference>
<dbReference type="InterPro" id="IPR036291">
    <property type="entry name" value="NAD(P)-bd_dom_sf"/>
</dbReference>
<dbReference type="InterPro" id="IPR020904">
    <property type="entry name" value="Sc_DH/Rdtase_CS"/>
</dbReference>
<dbReference type="InterPro" id="IPR002347">
    <property type="entry name" value="SDR_fam"/>
</dbReference>
<dbReference type="PANTHER" id="PTHR24322">
    <property type="entry name" value="PKSB"/>
    <property type="match status" value="1"/>
</dbReference>
<dbReference type="PANTHER" id="PTHR24322:SF750">
    <property type="entry name" value="RETINOL DEHYDROGENASE 10"/>
    <property type="match status" value="1"/>
</dbReference>
<dbReference type="Pfam" id="PF00106">
    <property type="entry name" value="adh_short"/>
    <property type="match status" value="1"/>
</dbReference>
<dbReference type="PRINTS" id="PR00081">
    <property type="entry name" value="GDHRDH"/>
</dbReference>
<dbReference type="PRINTS" id="PR00080">
    <property type="entry name" value="SDRFAMILY"/>
</dbReference>
<dbReference type="SUPFAM" id="SSF51735">
    <property type="entry name" value="NAD(P)-binding Rossmann-fold domains"/>
    <property type="match status" value="1"/>
</dbReference>
<dbReference type="PROSITE" id="PS00061">
    <property type="entry name" value="ADH_SHORT"/>
    <property type="match status" value="1"/>
</dbReference>
<proteinExistence type="evidence at transcript level"/>
<sequence>MHIVLEFFLVTFRVLWAFVLAAGKWLLRPKDKSVAGQVCLITGAGSGLGRLFALEFARRRAQLVLWDINSQSNEETAEMVRNIYRELEAEDSARRANSSAEEEVLPCCNLKVYTYTCDVGKRESVYSTAERVRREVGDVYLLLNNAGVVSGHHLLECPDELIERTMMVNCHAHFWTTKAFLPKMMELNHGHIVSVASSLGLFSTAGVEDYCASKFGVVGFHESLSHEIKASDKDGIKTTLVCPYLVDTGMFRGCRIRKEIEPFLPPLKPDYCVKQAMRAILTDQPMICTPRLMYIVTCMKSILPFEAVVCMYRFLGADKCMYPFIAQRKQATNNNEAKNGI</sequence>
<accession>Q6DCT3</accession>
<name>RD10A_XENLA</name>
<reference key="1">
    <citation type="submission" date="2004-07" db="EMBL/GenBank/DDBJ databases">
        <authorList>
            <consortium name="NIH - Xenopus Gene Collection (XGC) project"/>
        </authorList>
    </citation>
    <scope>NUCLEOTIDE SEQUENCE [LARGE SCALE MRNA]</scope>
    <source>
        <tissue>Embryo</tissue>
    </source>
</reference>
<comment type="function">
    <text evidence="1">Retinol dehydrogenase with a clear preference for NADP. Converts all-trans-retinol to all-trans-retinal. Has no detectable activity towards 11-cis-retinol, 9-cis-retinol and 13-cis-retinol (By similarity).</text>
</comment>
<comment type="catalytic activity">
    <reaction>
        <text>all-trans-retinol + NADP(+) = all-trans-retinal + NADPH + H(+)</text>
        <dbReference type="Rhea" id="RHEA:25033"/>
        <dbReference type="ChEBI" id="CHEBI:15378"/>
        <dbReference type="ChEBI" id="CHEBI:17336"/>
        <dbReference type="ChEBI" id="CHEBI:17898"/>
        <dbReference type="ChEBI" id="CHEBI:57783"/>
        <dbReference type="ChEBI" id="CHEBI:58349"/>
        <dbReference type="EC" id="1.1.1.300"/>
    </reaction>
</comment>
<comment type="pathway">
    <text>Cofactor metabolism; retinol metabolism.</text>
</comment>
<comment type="subcellular location">
    <subcellularLocation>
        <location evidence="4">Microsome membrane</location>
        <topology evidence="4">Single-pass membrane protein</topology>
    </subcellularLocation>
    <subcellularLocation>
        <location evidence="4">Endoplasmic reticulum membrane</location>
        <topology evidence="4">Single-pass membrane protein</topology>
    </subcellularLocation>
</comment>
<comment type="similarity">
    <text evidence="4">Belongs to the short-chain dehydrogenases/reductases (SDR) family.</text>
</comment>